<accession>P03178</accession>
<evidence type="ECO:0000250" key="1"/>
<evidence type="ECO:0000255" key="2"/>
<evidence type="ECO:0000305" key="3"/>
<organismHost>
    <name type="scientific">Homo sapiens</name>
    <name type="common">Human</name>
    <dbReference type="NCBI Taxonomy" id="9606"/>
</organismHost>
<protein>
    <recommendedName>
        <fullName>Envelope glycoprotein K</fullName>
    </recommendedName>
    <alternativeName>
        <fullName>Syncytial protein</fullName>
    </alternativeName>
</protein>
<reference key="1">
    <citation type="journal article" date="1985" name="Virology">
        <title>Nucleotide sequence of a herpes simplex virus type 1 gene that causes cell fusion.</title>
        <authorList>
            <person name="Debroy C."/>
            <person name="Pederson N."/>
            <person name="Person S."/>
        </authorList>
    </citation>
    <scope>NUCLEOTIDE SEQUENCE [GENOMIC DNA]</scope>
</reference>
<reference key="2">
    <citation type="journal article" date="2001" name="J. Virol.">
        <title>Glycoprotein K specified by herpes simplex virus type 1 is expressed on virions as a Golgi complex-dependent glycosylated species and functions in virion entry.</title>
        <authorList>
            <person name="Foster T.P."/>
            <person name="Rybachuk G.V."/>
            <person name="Kousoulas K.G."/>
        </authorList>
    </citation>
    <scope>SUBCELLULAR LOCATION</scope>
</reference>
<gene>
    <name type="primary">gK</name>
    <name type="ORF">UL53</name>
</gene>
<feature type="signal peptide">
    <location>
        <begin position="1"/>
        <end position="30"/>
    </location>
</feature>
<feature type="chain" id="PRO_0000038300" description="Envelope glycoprotein K">
    <location>
        <begin position="31"/>
        <end position="338"/>
    </location>
</feature>
<feature type="topological domain" description="Extracellular" evidence="2">
    <location>
        <begin position="31"/>
        <end position="121"/>
    </location>
</feature>
<feature type="transmembrane region" description="Helical" evidence="2">
    <location>
        <begin position="122"/>
        <end position="140"/>
    </location>
</feature>
<feature type="topological domain" description="Cytoplasmic" evidence="2">
    <location>
        <begin position="141"/>
        <end position="212"/>
    </location>
</feature>
<feature type="transmembrane region" description="Helical" evidence="2">
    <location>
        <begin position="213"/>
        <end position="233"/>
    </location>
</feature>
<feature type="topological domain" description="Extracellular" evidence="2">
    <location>
        <begin position="234"/>
        <end position="243"/>
    </location>
</feature>
<feature type="transmembrane region" description="Helical" evidence="2">
    <location>
        <begin position="244"/>
        <end position="264"/>
    </location>
</feature>
<feature type="topological domain" description="Cytoplasmic" evidence="2">
    <location>
        <begin position="265"/>
        <end position="301"/>
    </location>
</feature>
<feature type="transmembrane region" description="Helical" evidence="2">
    <location>
        <begin position="302"/>
        <end position="322"/>
    </location>
</feature>
<feature type="topological domain" description="Extracellular" evidence="2">
    <location>
        <begin position="323"/>
        <end position="338"/>
    </location>
</feature>
<feature type="region of interest" description="Involved in fusion" evidence="2">
    <location>
        <begin position="31"/>
        <end position="121"/>
    </location>
</feature>
<feature type="region of interest" description="Interaction with UL20" evidence="2">
    <location>
        <begin position="265"/>
        <end position="301"/>
    </location>
</feature>
<feature type="glycosylation site" description="N-linked (GlcNAc...) asparagine; by host" evidence="2">
    <location>
        <position position="48"/>
    </location>
</feature>
<feature type="glycosylation site" description="N-linked (GlcNAc...) asparagine; by host" evidence="2">
    <location>
        <position position="58"/>
    </location>
</feature>
<sequence length="338" mass="37526">MLAVRSLQHLSTVVLITAYGLVLVWYTVFGASPLHRCIYAVRPTGTNNDTALVWMKMNQTLLFLGAPTHPPNGGWRNHAHISYANLIAGRVVPFQVPPDATNRRIMNVHEAVNCLETLWYTRVRLVVVGWFLYLAFVALHQRRCMFGVVSPAHKMVAPATYLLNYAGRIVSSVFLQYPYTKITRLLCELSVQRQNLVQLFETDPVTFLYHRPAIGVIVGCELIVRFVAVGLIVGTAFISRGACAITYPLFLTITTWCFVSTIGLTELYCILRRGPAPKNADKAAAPGRSKGLSGVCGRCCSIILSGIAMRLCYIAVVAGVVLVALHYEQEIQRRLFDV</sequence>
<proteinExistence type="inferred from homology"/>
<name>GK_HHV1K</name>
<keyword id="KW-0325">Glycoprotein</keyword>
<keyword id="KW-1032">Host cell membrane</keyword>
<keyword id="KW-1039">Host endosome</keyword>
<keyword id="KW-1040">Host Golgi apparatus</keyword>
<keyword id="KW-1043">Host membrane</keyword>
<keyword id="KW-0472">Membrane</keyword>
<keyword id="KW-0732">Signal</keyword>
<keyword id="KW-1180">Syncytium formation induced by viral infection</keyword>
<keyword id="KW-0812">Transmembrane</keyword>
<keyword id="KW-1133">Transmembrane helix</keyword>
<keyword id="KW-1181">Viral primary envelope fusion with host outer nuclear membrane</keyword>
<keyword id="KW-1188">Viral release from host cell</keyword>
<organism>
    <name type="scientific">Human herpesvirus 1 (strain KOS)</name>
    <name type="common">HHV-1</name>
    <name type="synonym">Human herpes simplex virus 1</name>
    <dbReference type="NCBI Taxonomy" id="10306"/>
    <lineage>
        <taxon>Viruses</taxon>
        <taxon>Duplodnaviria</taxon>
        <taxon>Heunggongvirae</taxon>
        <taxon>Peploviricota</taxon>
        <taxon>Herviviricetes</taxon>
        <taxon>Herpesvirales</taxon>
        <taxon>Orthoherpesviridae</taxon>
        <taxon>Alphaherpesvirinae</taxon>
        <taxon>Simplexvirus</taxon>
        <taxon>Simplexvirus humanalpha1</taxon>
        <taxon>Human herpesvirus 1</taxon>
    </lineage>
</organism>
<dbReference type="EMBL" id="M11316">
    <property type="protein sequence ID" value="AAA45765.1"/>
    <property type="molecule type" value="Genomic_DNA"/>
</dbReference>
<dbReference type="PIR" id="A03735">
    <property type="entry name" value="MMBEK1"/>
</dbReference>
<dbReference type="SMR" id="P03178"/>
<dbReference type="GlyCosmos" id="P03178">
    <property type="glycosylation" value="2 sites, No reported glycans"/>
</dbReference>
<dbReference type="GO" id="GO:0044175">
    <property type="term" value="C:host cell endosome membrane"/>
    <property type="evidence" value="ECO:0007669"/>
    <property type="project" value="UniProtKB-SubCell"/>
</dbReference>
<dbReference type="GO" id="GO:0044178">
    <property type="term" value="C:host cell Golgi membrane"/>
    <property type="evidence" value="ECO:0007669"/>
    <property type="project" value="UniProtKB-SubCell"/>
</dbReference>
<dbReference type="GO" id="GO:0020002">
    <property type="term" value="C:host cell plasma membrane"/>
    <property type="evidence" value="ECO:0007669"/>
    <property type="project" value="UniProtKB-SubCell"/>
</dbReference>
<dbReference type="GO" id="GO:0016020">
    <property type="term" value="C:membrane"/>
    <property type="evidence" value="ECO:0007669"/>
    <property type="project" value="UniProtKB-KW"/>
</dbReference>
<dbReference type="GO" id="GO:0039700">
    <property type="term" value="P:fusion of viral membrane with host outer nuclear membrane"/>
    <property type="evidence" value="ECO:0007669"/>
    <property type="project" value="UniProtKB-KW"/>
</dbReference>
<dbReference type="GO" id="GO:0060141">
    <property type="term" value="P:symbiont-mediated induction of syncytium formation"/>
    <property type="evidence" value="ECO:0007669"/>
    <property type="project" value="UniProtKB-KW"/>
</dbReference>
<dbReference type="InterPro" id="IPR002567">
    <property type="entry name" value="GK"/>
</dbReference>
<dbReference type="Pfam" id="PF01621">
    <property type="entry name" value="Fusion_gly_K"/>
    <property type="match status" value="1"/>
</dbReference>
<comment type="function">
    <text evidence="1">Glycoprotein that probably modulates membrane fusion events during secondary envelopment of cytoplasmic capsids that bud into specific trans-Golgi network (TGN)-derived membranes. Also plays a role, together with gB, in virus-induced cell-to-cell fusion (syncytia formation). Seems to block fusion of virions with infected-cell membranes (By similarity).</text>
</comment>
<comment type="subunit">
    <text evidence="1">Interacts (via UL20 interaction region) with protein UL20 (via N-terminus); this interaction probably plays a role in the coordinate transport of protein UL20 and gK to the trans-Golgi network (TGN), and is required for the cell surface expression of gK.</text>
</comment>
<comment type="subcellular location">
    <subcellularLocation>
        <location evidence="1">Host cell membrane</location>
        <topology evidence="1">Multi-pass membrane protein</topology>
    </subcellularLocation>
    <subcellularLocation>
        <location evidence="1">Host endosome membrane</location>
        <topology evidence="1">Multi-pass membrane protein</topology>
    </subcellularLocation>
    <subcellularLocation>
        <location evidence="1">Host Golgi apparatus membrane</location>
        <topology evidence="1">Multi-pass membrane protein</topology>
    </subcellularLocation>
    <text evidence="1">During virion morphogenesis, this protein probably accumulates in the endosomes and trans-Golgi where secondary envelopment occurs. It is probably transported with UL20 to the cell surface from where it is endocytosed and directed to the trans-Golgi network (TGN). Cell surface expression of gK is required for virus-induced cell-to-cell fusion. Probably not present in extracellular virions (By similarity).</text>
</comment>
<comment type="PTM">
    <text evidence="1">N-glycosylated.</text>
</comment>
<comment type="similarity">
    <text evidence="3">Belongs to the alphaherpesvirinae glycoprotein K family.</text>
</comment>